<gene>
    <name type="primary">SDH</name>
    <name type="ordered locus">At5g51970</name>
    <name type="ORF">MSG15.7</name>
</gene>
<proteinExistence type="evidence at protein level"/>
<comment type="function">
    <text evidence="4">Polyol dehydrogenase that catalyzes the NAD(+)-dependent oxidation of various sugar alcohols. Is mostly active with D-sorbitol (D-glucitol), ribitol and xylitol as substrates, leading to the C2-oxidized products D-fructose, D-ribulose and D-xylulose, respectively. To a lesser extent, can also oxidize arabitol, mannitol, lactitol and maltitol in vitro. Is required for sorbitol metabolism. Cannot use NADP(+) as the electron acceptor.</text>
</comment>
<comment type="catalytic activity">
    <reaction evidence="4">
        <text>keto-D-fructose + NADH + H(+) = D-sorbitol + NAD(+)</text>
        <dbReference type="Rhea" id="RHEA:33031"/>
        <dbReference type="ChEBI" id="CHEBI:15378"/>
        <dbReference type="ChEBI" id="CHEBI:17924"/>
        <dbReference type="ChEBI" id="CHEBI:48095"/>
        <dbReference type="ChEBI" id="CHEBI:57540"/>
        <dbReference type="ChEBI" id="CHEBI:57945"/>
    </reaction>
    <physiologicalReaction direction="right-to-left" evidence="4">
        <dbReference type="Rhea" id="RHEA:33033"/>
    </physiologicalReaction>
</comment>
<comment type="catalytic activity">
    <reaction evidence="4">
        <text>ribitol + NAD(+) = D-ribulose + NADH + H(+)</text>
        <dbReference type="Rhea" id="RHEA:20053"/>
        <dbReference type="ChEBI" id="CHEBI:15378"/>
        <dbReference type="ChEBI" id="CHEBI:15963"/>
        <dbReference type="ChEBI" id="CHEBI:17173"/>
        <dbReference type="ChEBI" id="CHEBI:57540"/>
        <dbReference type="ChEBI" id="CHEBI:57945"/>
        <dbReference type="EC" id="1.1.1.56"/>
    </reaction>
</comment>
<comment type="catalytic activity">
    <reaction evidence="4">
        <text>xylitol + NAD(+) = D-xylulose + NADH + H(+)</text>
        <dbReference type="Rhea" id="RHEA:20433"/>
        <dbReference type="ChEBI" id="CHEBI:15378"/>
        <dbReference type="ChEBI" id="CHEBI:17140"/>
        <dbReference type="ChEBI" id="CHEBI:17151"/>
        <dbReference type="ChEBI" id="CHEBI:57540"/>
        <dbReference type="ChEBI" id="CHEBI:57945"/>
        <dbReference type="EC" id="1.1.1.9"/>
    </reaction>
</comment>
<comment type="cofactor">
    <cofactor evidence="1">
        <name>Zn(2+)</name>
        <dbReference type="ChEBI" id="CHEBI:29105"/>
    </cofactor>
    <text evidence="1">Binds 1 zinc ion per subunit.</text>
</comment>
<comment type="biophysicochemical properties">
    <kinetics>
        <KM evidence="4">1.2 mM for sorbitol</KM>
        <KM evidence="4">0.07 mM for NAD(+)</KM>
        <text evidence="4">kcat is 0.33 sec(-1) towards sorbitol for the reaction with sorbitol as substrate. kcat is 0.39 sec(-1) towards NAD(+) for the reaction with sorbitol as substrate.</text>
    </kinetics>
</comment>
<comment type="subunit">
    <text evidence="1">Homotetramer.</text>
</comment>
<comment type="subcellular location">
    <subcellularLocation>
        <location evidence="1">Mitochondrion membrane</location>
        <topology evidence="1">Peripheral membrane protein</topology>
    </subcellularLocation>
    <subcellularLocation>
        <location evidence="6">Cell membrane</location>
        <topology evidence="6">Peripheral membrane protein</topology>
        <orientation evidence="6">Cytoplasmic side</orientation>
    </subcellularLocation>
    <subcellularLocation>
        <location evidence="4">Cytoplasm</location>
        <location evidence="4">Cytosol</location>
    </subcellularLocation>
</comment>
<comment type="tissue specificity">
    <text evidence="4">Mostly expressed in dry seeds and leaves, and, to a lower extent, in roots, stems, flowers and siliques (at protein level).</text>
</comment>
<comment type="disruption phenotype">
    <text evidence="4">Reduced dry weight and primary root length when grown in the presence of sorbitol. Increased resistance to dehydration under short-day conditions.</text>
</comment>
<comment type="similarity">
    <text evidence="6">Belongs to the zinc-containing alcohol dehydrogenase family.</text>
</comment>
<sequence>MGKGGMSQGEGSKVEEENMAAWLVGINTLKIQPFLLPSVGPHDVRVRMKAVGICGSDVHYLKTMRCADFVVKEPMVIGHECAGIIEEVGEEVKHLVVGDRVALEPGISCWRCNLCREGRYNLCPEMKFFATPPVHGSLANQVVHPADLCFKLPENVSLEEGAMCEPLSVGVHACRRAEVGPETNVLVMGAGPIGLVTMLAARAFSVPRIVIVDVDENRLAVAKQLGADEIVQVTTNLEDVGSEVEQIQKAMGSNIDVTFDCAGFNKTMSTALAATRCGGKVCLVGMGHGIMTVPLTPAAAREVDVVGVFRYKNTWPLCLEFLTSGKIDVKPLITHRFGFSQKEVEDAFETSARGSNAIKVMFNL</sequence>
<reference key="1">
    <citation type="journal article" date="1998" name="DNA Res.">
        <title>Structural analysis of Arabidopsis thaliana chromosome 5. VII. Sequence features of the regions of 1,013,767 bp covered by sixteen physically assigned P1 and TAC clones.</title>
        <authorList>
            <person name="Nakamura Y."/>
            <person name="Sato S."/>
            <person name="Asamizu E."/>
            <person name="Kaneko T."/>
            <person name="Kotani H."/>
            <person name="Miyajima N."/>
            <person name="Tabata S."/>
        </authorList>
    </citation>
    <scope>NUCLEOTIDE SEQUENCE [LARGE SCALE GENOMIC DNA]</scope>
    <source>
        <strain>cv. Columbia</strain>
    </source>
</reference>
<reference key="2">
    <citation type="journal article" date="2017" name="Plant J.">
        <title>Araport11: a complete reannotation of the Arabidopsis thaliana reference genome.</title>
        <authorList>
            <person name="Cheng C.Y."/>
            <person name="Krishnakumar V."/>
            <person name="Chan A.P."/>
            <person name="Thibaud-Nissen F."/>
            <person name="Schobel S."/>
            <person name="Town C.D."/>
        </authorList>
    </citation>
    <scope>GENOME REANNOTATION</scope>
    <source>
        <strain>cv. Columbia</strain>
    </source>
</reference>
<reference key="3">
    <citation type="journal article" date="2003" name="Science">
        <title>Empirical analysis of transcriptional activity in the Arabidopsis genome.</title>
        <authorList>
            <person name="Yamada K."/>
            <person name="Lim J."/>
            <person name="Dale J.M."/>
            <person name="Chen H."/>
            <person name="Shinn P."/>
            <person name="Palm C.J."/>
            <person name="Southwick A.M."/>
            <person name="Wu H.C."/>
            <person name="Kim C.J."/>
            <person name="Nguyen M."/>
            <person name="Pham P.K."/>
            <person name="Cheuk R.F."/>
            <person name="Karlin-Newmann G."/>
            <person name="Liu S.X."/>
            <person name="Lam B."/>
            <person name="Sakano H."/>
            <person name="Wu T."/>
            <person name="Yu G."/>
            <person name="Miranda M."/>
            <person name="Quach H.L."/>
            <person name="Tripp M."/>
            <person name="Chang C.H."/>
            <person name="Lee J.M."/>
            <person name="Toriumi M.J."/>
            <person name="Chan M.M."/>
            <person name="Tang C.C."/>
            <person name="Onodera C.S."/>
            <person name="Deng J.M."/>
            <person name="Akiyama K."/>
            <person name="Ansari Y."/>
            <person name="Arakawa T."/>
            <person name="Banh J."/>
            <person name="Banno F."/>
            <person name="Bowser L."/>
            <person name="Brooks S.Y."/>
            <person name="Carninci P."/>
            <person name="Chao Q."/>
            <person name="Choy N."/>
            <person name="Enju A."/>
            <person name="Goldsmith A.D."/>
            <person name="Gurjal M."/>
            <person name="Hansen N.F."/>
            <person name="Hayashizaki Y."/>
            <person name="Johnson-Hopson C."/>
            <person name="Hsuan V.W."/>
            <person name="Iida K."/>
            <person name="Karnes M."/>
            <person name="Khan S."/>
            <person name="Koesema E."/>
            <person name="Ishida J."/>
            <person name="Jiang P.X."/>
            <person name="Jones T."/>
            <person name="Kawai J."/>
            <person name="Kamiya A."/>
            <person name="Meyers C."/>
            <person name="Nakajima M."/>
            <person name="Narusaka M."/>
            <person name="Seki M."/>
            <person name="Sakurai T."/>
            <person name="Satou M."/>
            <person name="Tamse R."/>
            <person name="Vaysberg M."/>
            <person name="Wallender E.K."/>
            <person name="Wong C."/>
            <person name="Yamamura Y."/>
            <person name="Yuan S."/>
            <person name="Shinozaki K."/>
            <person name="Davis R.W."/>
            <person name="Theologis A."/>
            <person name="Ecker J.R."/>
        </authorList>
    </citation>
    <scope>NUCLEOTIDE SEQUENCE [LARGE SCALE MRNA]</scope>
    <source>
        <strain>cv. Columbia</strain>
    </source>
</reference>
<reference key="4">
    <citation type="submission" date="2006-07" db="EMBL/GenBank/DDBJ databases">
        <title>Large-scale analysis of RIKEN Arabidopsis full-length (RAFL) cDNAs.</title>
        <authorList>
            <person name="Totoki Y."/>
            <person name="Seki M."/>
            <person name="Ishida J."/>
            <person name="Nakajima M."/>
            <person name="Enju A."/>
            <person name="Kamiya A."/>
            <person name="Narusaka M."/>
            <person name="Shin-i T."/>
            <person name="Nakagawa M."/>
            <person name="Sakamoto N."/>
            <person name="Oishi K."/>
            <person name="Kohara Y."/>
            <person name="Kobayashi M."/>
            <person name="Toyoda A."/>
            <person name="Sakaki Y."/>
            <person name="Sakurai T."/>
            <person name="Iida K."/>
            <person name="Akiyama K."/>
            <person name="Satou M."/>
            <person name="Toyoda T."/>
            <person name="Konagaya A."/>
            <person name="Carninci P."/>
            <person name="Kawai J."/>
            <person name="Hayashizaki Y."/>
            <person name="Shinozaki K."/>
        </authorList>
    </citation>
    <scope>NUCLEOTIDE SEQUENCE [LARGE SCALE MRNA]</scope>
    <source>
        <strain>cv. Columbia</strain>
    </source>
</reference>
<reference key="5">
    <citation type="submission" date="2002-03" db="EMBL/GenBank/DDBJ databases">
        <title>Full-length cDNA from Arabidopsis thaliana.</title>
        <authorList>
            <person name="Brover V.V."/>
            <person name="Troukhan M.E."/>
            <person name="Alexandrov N.A."/>
            <person name="Lu Y.-P."/>
            <person name="Flavell R.B."/>
            <person name="Feldmann K.A."/>
        </authorList>
    </citation>
    <scope>NUCLEOTIDE SEQUENCE [LARGE SCALE MRNA]</scope>
</reference>
<reference key="6">
    <citation type="journal article" date="2009" name="DNA Res.">
        <title>Analysis of multiple occurrences of alternative splicing events in Arabidopsis thaliana using novel sequenced full-length cDNAs.</title>
        <authorList>
            <person name="Iida K."/>
            <person name="Fukami-Kobayashi K."/>
            <person name="Toyoda A."/>
            <person name="Sakaki Y."/>
            <person name="Kobayashi M."/>
            <person name="Seki M."/>
            <person name="Shinozaki K."/>
        </authorList>
    </citation>
    <scope>NUCLEOTIDE SEQUENCE [LARGE SCALE MRNA] OF 169-364</scope>
    <source>
        <strain>cv. Columbia</strain>
        <tissue>Flower</tissue>
        <tissue>Silique</tissue>
    </source>
</reference>
<reference key="7">
    <citation type="journal article" date="2013" name="Plant Sci.">
        <title>Sorbitol dehydrogenase is a cytosolic protein required for sorbitol metabolism in Arabidopsis thaliana.</title>
        <authorList>
            <person name="Aguayo M.F."/>
            <person name="Ampuero D."/>
            <person name="Mandujano P."/>
            <person name="Parada R."/>
            <person name="Munoz R."/>
            <person name="Gallart M."/>
            <person name="Altabella T."/>
            <person name="Cabrera R."/>
            <person name="Stange C."/>
            <person name="Handford M."/>
        </authorList>
    </citation>
    <scope>FUNCTION</scope>
    <scope>CATALYTIC ACTIVITY</scope>
    <scope>SUBSTRATE SPECIFICITY</scope>
    <scope>DISRUPTION PHENOTYPE</scope>
    <scope>SUBCELLULAR LOCATION</scope>
    <scope>TISSUE SPECIFICITY</scope>
    <scope>BIOPHYSICOCHEMICAL PROPERTIES</scope>
    <source>
        <strain>cv. Columbia</strain>
    </source>
</reference>
<evidence type="ECO:0000250" key="1"/>
<evidence type="ECO:0000250" key="2">
    <source>
        <dbReference type="UniProtKB" id="P07846"/>
    </source>
</evidence>
<evidence type="ECO:0000250" key="3">
    <source>
        <dbReference type="UniProtKB" id="Q00796"/>
    </source>
</evidence>
<evidence type="ECO:0000269" key="4">
    <source>
    </source>
</evidence>
<evidence type="ECO:0000303" key="5">
    <source>
    </source>
</evidence>
<evidence type="ECO:0000305" key="6"/>
<evidence type="ECO:0000305" key="7">
    <source>
    </source>
</evidence>
<organism>
    <name type="scientific">Arabidopsis thaliana</name>
    <name type="common">Mouse-ear cress</name>
    <dbReference type="NCBI Taxonomy" id="3702"/>
    <lineage>
        <taxon>Eukaryota</taxon>
        <taxon>Viridiplantae</taxon>
        <taxon>Streptophyta</taxon>
        <taxon>Embryophyta</taxon>
        <taxon>Tracheophyta</taxon>
        <taxon>Spermatophyta</taxon>
        <taxon>Magnoliopsida</taxon>
        <taxon>eudicotyledons</taxon>
        <taxon>Gunneridae</taxon>
        <taxon>Pentapetalae</taxon>
        <taxon>rosids</taxon>
        <taxon>malvids</taxon>
        <taxon>Brassicales</taxon>
        <taxon>Brassicaceae</taxon>
        <taxon>Camelineae</taxon>
        <taxon>Arabidopsis</taxon>
    </lineage>
</organism>
<keyword id="KW-1003">Cell membrane</keyword>
<keyword id="KW-0963">Cytoplasm</keyword>
<keyword id="KW-0472">Membrane</keyword>
<keyword id="KW-0479">Metal-binding</keyword>
<keyword id="KW-0496">Mitochondrion</keyword>
<keyword id="KW-0520">NAD</keyword>
<keyword id="KW-0560">Oxidoreductase</keyword>
<keyword id="KW-1185">Reference proteome</keyword>
<keyword id="KW-0862">Zinc</keyword>
<accession>Q9FJ95</accession>
<accession>B9DHK6</accession>
<accession>Q67XB8</accession>
<accession>Q8LEV5</accession>
<name>DHSO_ARATH</name>
<dbReference type="EC" id="1.1.1.-" evidence="4"/>
<dbReference type="EC" id="1.1.1.56" evidence="4"/>
<dbReference type="EC" id="1.1.1.9" evidence="4"/>
<dbReference type="EMBL" id="AB015478">
    <property type="protein sequence ID" value="BAB11045.1"/>
    <property type="molecule type" value="Genomic_DNA"/>
</dbReference>
<dbReference type="EMBL" id="CP002688">
    <property type="protein sequence ID" value="AED96152.1"/>
    <property type="molecule type" value="Genomic_DNA"/>
</dbReference>
<dbReference type="EMBL" id="CP002688">
    <property type="protein sequence ID" value="AED96153.1"/>
    <property type="molecule type" value="Genomic_DNA"/>
</dbReference>
<dbReference type="EMBL" id="AF370161">
    <property type="protein sequence ID" value="AAK43976.1"/>
    <property type="molecule type" value="mRNA"/>
</dbReference>
<dbReference type="EMBL" id="AY133848">
    <property type="protein sequence ID" value="AAM91782.1"/>
    <property type="molecule type" value="mRNA"/>
</dbReference>
<dbReference type="EMBL" id="AK176901">
    <property type="protein sequence ID" value="BAD44664.1"/>
    <property type="molecule type" value="mRNA"/>
</dbReference>
<dbReference type="EMBL" id="AK230367">
    <property type="protein sequence ID" value="BAF02166.1"/>
    <property type="molecule type" value="mRNA"/>
</dbReference>
<dbReference type="EMBL" id="AY085213">
    <property type="protein sequence ID" value="AAM62446.1"/>
    <property type="molecule type" value="mRNA"/>
</dbReference>
<dbReference type="EMBL" id="AK317559">
    <property type="protein sequence ID" value="BAH20223.1"/>
    <property type="molecule type" value="mRNA"/>
</dbReference>
<dbReference type="RefSeq" id="NP_200010.1">
    <property type="nucleotide sequence ID" value="NM_124576.3"/>
</dbReference>
<dbReference type="RefSeq" id="NP_974925.1">
    <property type="nucleotide sequence ID" value="NM_203196.1"/>
</dbReference>
<dbReference type="SMR" id="Q9FJ95"/>
<dbReference type="BioGRID" id="20517">
    <property type="interactions" value="1"/>
</dbReference>
<dbReference type="FunCoup" id="Q9FJ95">
    <property type="interactions" value="1738"/>
</dbReference>
<dbReference type="STRING" id="3702.Q9FJ95"/>
<dbReference type="PaxDb" id="3702-AT5G51970.1"/>
<dbReference type="ProteomicsDB" id="224244"/>
<dbReference type="EnsemblPlants" id="AT5G51970.1">
    <property type="protein sequence ID" value="AT5G51970.1"/>
    <property type="gene ID" value="AT5G51970"/>
</dbReference>
<dbReference type="EnsemblPlants" id="AT5G51970.2">
    <property type="protein sequence ID" value="AT5G51970.2"/>
    <property type="gene ID" value="AT5G51970"/>
</dbReference>
<dbReference type="GeneID" id="835272"/>
<dbReference type="Gramene" id="AT5G51970.1">
    <property type="protein sequence ID" value="AT5G51970.1"/>
    <property type="gene ID" value="AT5G51970"/>
</dbReference>
<dbReference type="Gramene" id="AT5G51970.2">
    <property type="protein sequence ID" value="AT5G51970.2"/>
    <property type="gene ID" value="AT5G51970"/>
</dbReference>
<dbReference type="KEGG" id="ath:AT5G51970"/>
<dbReference type="Araport" id="AT5G51970"/>
<dbReference type="TAIR" id="AT5G51970">
    <property type="gene designation" value="ATSDH"/>
</dbReference>
<dbReference type="eggNOG" id="KOG0024">
    <property type="taxonomic scope" value="Eukaryota"/>
</dbReference>
<dbReference type="HOGENOM" id="CLU_026673_11_5_1"/>
<dbReference type="InParanoid" id="Q9FJ95"/>
<dbReference type="OMA" id="FETWYAM"/>
<dbReference type="OrthoDB" id="256333at2759"/>
<dbReference type="PhylomeDB" id="Q9FJ95"/>
<dbReference type="BioCyc" id="ARA:AT5G51970-MONOMER"/>
<dbReference type="PRO" id="PR:Q9FJ95"/>
<dbReference type="Proteomes" id="UP000006548">
    <property type="component" value="Chromosome 5"/>
</dbReference>
<dbReference type="ExpressionAtlas" id="Q9FJ95">
    <property type="expression patterns" value="baseline and differential"/>
</dbReference>
<dbReference type="GO" id="GO:0005737">
    <property type="term" value="C:cytoplasm"/>
    <property type="evidence" value="ECO:0000314"/>
    <property type="project" value="UniProtKB"/>
</dbReference>
<dbReference type="GO" id="GO:0005829">
    <property type="term" value="C:cytosol"/>
    <property type="evidence" value="ECO:0000314"/>
    <property type="project" value="TAIR"/>
</dbReference>
<dbReference type="GO" id="GO:0031966">
    <property type="term" value="C:mitochondrial membrane"/>
    <property type="evidence" value="ECO:0007669"/>
    <property type="project" value="UniProtKB-SubCell"/>
</dbReference>
<dbReference type="GO" id="GO:0005886">
    <property type="term" value="C:plasma membrane"/>
    <property type="evidence" value="ECO:0007669"/>
    <property type="project" value="UniProtKB-SubCell"/>
</dbReference>
<dbReference type="GO" id="GO:0009506">
    <property type="term" value="C:plasmodesma"/>
    <property type="evidence" value="ECO:0007005"/>
    <property type="project" value="TAIR"/>
</dbReference>
<dbReference type="GO" id="GO:0009536">
    <property type="term" value="C:plastid"/>
    <property type="evidence" value="ECO:0007005"/>
    <property type="project" value="TAIR"/>
</dbReference>
<dbReference type="GO" id="GO:0046526">
    <property type="term" value="F:D-xylulose reductase activity"/>
    <property type="evidence" value="ECO:0000314"/>
    <property type="project" value="TAIR"/>
</dbReference>
<dbReference type="GO" id="GO:0003939">
    <property type="term" value="F:L-iditol 2-dehydrogenase (NAD+) activity"/>
    <property type="evidence" value="ECO:0000314"/>
    <property type="project" value="UniProtKB"/>
</dbReference>
<dbReference type="GO" id="GO:0050255">
    <property type="term" value="F:ribitol 2-dehydrogenase (NAD+) activity"/>
    <property type="evidence" value="ECO:0000314"/>
    <property type="project" value="TAIR"/>
</dbReference>
<dbReference type="GO" id="GO:0009010">
    <property type="term" value="F:sorbitol-6-phosphate 2-dehydrogenase activity"/>
    <property type="evidence" value="ECO:0000314"/>
    <property type="project" value="TAIR"/>
</dbReference>
<dbReference type="GO" id="GO:0008270">
    <property type="term" value="F:zinc ion binding"/>
    <property type="evidence" value="ECO:0007669"/>
    <property type="project" value="InterPro"/>
</dbReference>
<dbReference type="GO" id="GO:0006060">
    <property type="term" value="P:sorbitol metabolic process"/>
    <property type="evidence" value="ECO:0000314"/>
    <property type="project" value="TAIR"/>
</dbReference>
<dbReference type="CDD" id="cd05285">
    <property type="entry name" value="sorbitol_DH"/>
    <property type="match status" value="1"/>
</dbReference>
<dbReference type="FunFam" id="3.40.50.720:FF:000068">
    <property type="entry name" value="Sorbitol dehydrogenase"/>
    <property type="match status" value="1"/>
</dbReference>
<dbReference type="Gene3D" id="3.90.180.10">
    <property type="entry name" value="Medium-chain alcohol dehydrogenases, catalytic domain"/>
    <property type="match status" value="1"/>
</dbReference>
<dbReference type="Gene3D" id="3.40.50.720">
    <property type="entry name" value="NAD(P)-binding Rossmann-like Domain"/>
    <property type="match status" value="1"/>
</dbReference>
<dbReference type="InterPro" id="IPR013149">
    <property type="entry name" value="ADH-like_C"/>
</dbReference>
<dbReference type="InterPro" id="IPR013154">
    <property type="entry name" value="ADH-like_N"/>
</dbReference>
<dbReference type="InterPro" id="IPR002328">
    <property type="entry name" value="ADH_Zn_CS"/>
</dbReference>
<dbReference type="InterPro" id="IPR011032">
    <property type="entry name" value="GroES-like_sf"/>
</dbReference>
<dbReference type="InterPro" id="IPR036291">
    <property type="entry name" value="NAD(P)-bd_dom_sf"/>
</dbReference>
<dbReference type="InterPro" id="IPR020843">
    <property type="entry name" value="PKS_ER"/>
</dbReference>
<dbReference type="InterPro" id="IPR045306">
    <property type="entry name" value="SDH-like"/>
</dbReference>
<dbReference type="PANTHER" id="PTHR43161">
    <property type="entry name" value="SORBITOL DEHYDROGENASE"/>
    <property type="match status" value="1"/>
</dbReference>
<dbReference type="PANTHER" id="PTHR43161:SF9">
    <property type="entry name" value="SORBITOL DEHYDROGENASE"/>
    <property type="match status" value="1"/>
</dbReference>
<dbReference type="Pfam" id="PF08240">
    <property type="entry name" value="ADH_N"/>
    <property type="match status" value="1"/>
</dbReference>
<dbReference type="Pfam" id="PF00107">
    <property type="entry name" value="ADH_zinc_N"/>
    <property type="match status" value="1"/>
</dbReference>
<dbReference type="SMART" id="SM00829">
    <property type="entry name" value="PKS_ER"/>
    <property type="match status" value="1"/>
</dbReference>
<dbReference type="SUPFAM" id="SSF50129">
    <property type="entry name" value="GroES-like"/>
    <property type="match status" value="1"/>
</dbReference>
<dbReference type="SUPFAM" id="SSF51735">
    <property type="entry name" value="NAD(P)-binding Rossmann-fold domains"/>
    <property type="match status" value="1"/>
</dbReference>
<dbReference type="PROSITE" id="PS00059">
    <property type="entry name" value="ADH_ZINC"/>
    <property type="match status" value="1"/>
</dbReference>
<protein>
    <recommendedName>
        <fullName evidence="5">Sorbitol dehydrogenase</fullName>
        <shortName evidence="5">SDH</shortName>
        <ecNumber evidence="4">1.1.1.-</ecNumber>
    </recommendedName>
    <alternativeName>
        <fullName evidence="7">Polyol dehydrogenase</fullName>
    </alternativeName>
    <alternativeName>
        <fullName evidence="5">Ribitol dehydrogenase</fullName>
        <shortName evidence="5">RDH</shortName>
        <ecNumber evidence="4">1.1.1.56</ecNumber>
    </alternativeName>
    <alternativeName>
        <fullName evidence="5">Xylitol dehydrogenase</fullName>
        <shortName evidence="5">XDH</shortName>
        <ecNumber evidence="4">1.1.1.9</ecNumber>
    </alternativeName>
</protein>
<feature type="chain" id="PRO_0000422084" description="Sorbitol dehydrogenase">
    <location>
        <begin position="1"/>
        <end position="364"/>
    </location>
</feature>
<feature type="binding site" evidence="3">
    <location>
        <position position="54"/>
    </location>
    <ligand>
        <name>Zn(2+)</name>
        <dbReference type="ChEBI" id="CHEBI:29105"/>
        <note>catalytic</note>
    </ligand>
</feature>
<feature type="binding site" evidence="2">
    <location>
        <position position="60"/>
    </location>
    <ligand>
        <name>substrate</name>
    </ligand>
</feature>
<feature type="binding site" evidence="3">
    <location>
        <position position="79"/>
    </location>
    <ligand>
        <name>Zn(2+)</name>
        <dbReference type="ChEBI" id="CHEBI:29105"/>
        <note>catalytic</note>
    </ligand>
</feature>
<feature type="binding site" evidence="3">
    <location>
        <position position="80"/>
    </location>
    <ligand>
        <name>Zn(2+)</name>
        <dbReference type="ChEBI" id="CHEBI:29105"/>
        <note>catalytic</note>
    </ligand>
</feature>
<feature type="binding site" evidence="2">
    <location>
        <position position="165"/>
    </location>
    <ligand>
        <name>substrate</name>
    </ligand>
</feature>
<feature type="binding site" evidence="3">
    <location>
        <position position="193"/>
    </location>
    <ligand>
        <name>NAD(+)</name>
        <dbReference type="ChEBI" id="CHEBI:57540"/>
    </ligand>
</feature>
<feature type="binding site" evidence="3">
    <location>
        <position position="213"/>
    </location>
    <ligand>
        <name>NAD(+)</name>
        <dbReference type="ChEBI" id="CHEBI:57540"/>
    </ligand>
</feature>
<feature type="binding site" evidence="3">
    <location>
        <position position="218"/>
    </location>
    <ligand>
        <name>NAD(+)</name>
        <dbReference type="ChEBI" id="CHEBI:57540"/>
    </ligand>
</feature>
<feature type="binding site" evidence="3">
    <location>
        <begin position="284"/>
        <end position="286"/>
    </location>
    <ligand>
        <name>NAD(+)</name>
        <dbReference type="ChEBI" id="CHEBI:57540"/>
    </ligand>
</feature>
<feature type="binding site" evidence="3">
    <location>
        <begin position="308"/>
        <end position="310"/>
    </location>
    <ligand>
        <name>NAD(+)</name>
        <dbReference type="ChEBI" id="CHEBI:57540"/>
    </ligand>
</feature>
<feature type="binding site" evidence="2">
    <location>
        <position position="310"/>
    </location>
    <ligand>
        <name>substrate</name>
    </ligand>
</feature>
<feature type="binding site" evidence="2">
    <location>
        <position position="311"/>
    </location>
    <ligand>
        <name>substrate</name>
    </ligand>
</feature>
<feature type="sequence conflict" description="In Ref. 4; BAD44664." evidence="6" ref="4">
    <original>R</original>
    <variation>I</variation>
    <location>
        <position position="65"/>
    </location>
</feature>
<feature type="sequence conflict" description="In Ref. 5; AAM62446." evidence="6" ref="5">
    <original>R</original>
    <variation>Q</variation>
    <location>
        <position position="202"/>
    </location>
</feature>